<reference key="1">
    <citation type="journal article" date="1988" name="Eur. J. Biochem.">
        <title>Cloning of a full-length complementary DNA for fatty-acid-binding protein from bovine heart.</title>
        <authorList>
            <person name="Billich S."/>
            <person name="Wissel T."/>
            <person name="Kratzin H."/>
            <person name="Hahn U."/>
            <person name="Hagenhoff B."/>
            <person name="Lezius A.G."/>
            <person name="Spener F."/>
        </authorList>
    </citation>
    <scope>NUCLEOTIDE SEQUENCE [MRNA]</scope>
</reference>
<reference key="2">
    <citation type="journal article" date="1990" name="J. Cell Biol.">
        <title>Developmental regulation of mammary-derived growth inhibitor expression in bovine mammary tissue.</title>
        <authorList>
            <person name="Kurtz A."/>
            <person name="Vogel F."/>
            <person name="Funa K."/>
            <person name="Heldin C.-H."/>
            <person name="Grosse R."/>
        </authorList>
    </citation>
    <scope>NUCLEOTIDE SEQUENCE [MRNA]</scope>
    <source>
        <tissue>Mammary gland</tissue>
    </source>
</reference>
<reference key="3">
    <citation type="submission" date="2005-08" db="EMBL/GenBank/DDBJ databases">
        <title>Sequencing of heart fatty acid-binding protein (FABP) gene in Korean cattle (Hanwoo).</title>
        <authorList>
            <person name="Chung E.R."/>
            <person name="Shin S.C."/>
            <person name="Kim W.T."/>
        </authorList>
    </citation>
    <scope>NUCLEOTIDE SEQUENCE [GENOMIC DNA]</scope>
    <source>
        <strain>Korean</strain>
    </source>
</reference>
<reference key="4">
    <citation type="submission" date="2005-08" db="EMBL/GenBank/DDBJ databases">
        <authorList>
            <consortium name="NIH - Mammalian Gene Collection (MGC) project"/>
        </authorList>
    </citation>
    <scope>NUCLEOTIDE SEQUENCE [LARGE SCALE MRNA]</scope>
    <source>
        <strain>Crossbred X Angus</strain>
        <tissue>Ileum</tissue>
    </source>
</reference>
<reference key="5">
    <citation type="journal article" date="1990" name="J. Biol. Chem.">
        <title>Cardiac fatty acid-binding proteins. Isolation and characterization of the mitochondrial fatty acid-binding protein and its structural relationship with the cytosolic isoforms.</title>
        <authorList>
            <person name="Unterberg C."/>
            <person name="Boerchers T."/>
            <person name="Hoejrup P."/>
            <person name="Roepstorff P."/>
            <person name="Knudsen J."/>
            <person name="Spener F."/>
        </authorList>
    </citation>
    <scope>PROTEIN SEQUENCE OF 2-133</scope>
    <scope>ACETYLATION AT VAL-2</scope>
</reference>
<reference key="6">
    <citation type="journal article" date="1987" name="J. Biol. Chem.">
        <title>Identification of a polypeptide growth inhibitor from bovine mammary gland. Sequence homology to fatty acid- and retinoid-binding proteins.</title>
        <authorList>
            <person name="Boehmer F.-D."/>
            <person name="Kraft R."/>
            <person name="Otto A."/>
            <person name="Wernstedt C."/>
            <person name="Hellman U."/>
            <person name="Kurtz A."/>
            <person name="Mueller T."/>
            <person name="Rohde K."/>
            <person name="Etzold G."/>
            <person name="Lehmann W."/>
            <person name="Langen P."/>
            <person name="Heldin C.-H."/>
            <person name="Grosse R."/>
        </authorList>
    </citation>
    <scope>PROTEIN SEQUENCE OF 2-132</scope>
</reference>
<reference key="7">
    <citation type="journal article" date="1993" name="Biochimie">
        <title>Purification and characterisation of a polymorphic low M(r) bovine muscle cysteine proteinase inhibitor: structural identity with fatty-acid-binding proteins.</title>
        <authorList>
            <person name="Zabari M."/>
            <person name="Berri M."/>
            <person name="Rouchon P."/>
            <person name="Zamora F."/>
            <person name="Tassy C."/>
            <person name="Ribadeau-Dumas B."/>
            <person name="Ouali A."/>
        </authorList>
    </citation>
    <scope>PARTIAL PROTEIN SEQUENCE</scope>
    <source>
        <tissue>Skeletal muscle</tissue>
    </source>
</reference>
<reference key="8">
    <citation type="journal article" date="1991" name="Eur. J. Biochem.">
        <title>Three-dimensional structure of fatty-acid-binding protein from bovine heart.</title>
        <authorList>
            <person name="Mueller-Fahrnow A."/>
            <person name="Egner U."/>
            <person name="Jones T.A."/>
            <person name="Ruedel H."/>
            <person name="Spener F."/>
            <person name="Saenger W."/>
        </authorList>
    </citation>
    <scope>CRYSTALLIZATION</scope>
</reference>
<reference key="9">
    <citation type="journal article" date="1992" name="Eur. J. Biochem.">
        <title>Sequence-specific 1H-NMR assignment and determination of the secondary structure of bovine heart fatty-acid-binding protein.</title>
        <authorList>
            <person name="Luecke C."/>
            <person name="Lassen D."/>
            <person name="Kreienkamp H.-J."/>
            <person name="Spener F."/>
            <person name="Rueterjans H."/>
        </authorList>
    </citation>
    <scope>STRUCTURE BY NMR</scope>
</reference>
<reference key="10">
    <citation type="journal article" date="1995" name="Eur. J. Biochem.">
        <title>Three-dimensional structure of bovine heart fatty-acid-binding protein with bound palmitic acid, determined by multidimensional NMR spectroscopy.</title>
        <authorList>
            <person name="Lassen D."/>
            <person name="Luecke C."/>
            <person name="Kveder M."/>
            <person name="Mesgarzadeh A."/>
            <person name="Schmidt J.M."/>
            <person name="Specht B."/>
            <person name="Lezius A."/>
            <person name="Spener F."/>
            <person name="Rueterjans H."/>
        </authorList>
    </citation>
    <scope>STRUCTURE BY NMR IN COMPLEX WITH PALMITATE</scope>
</reference>
<reference key="11">
    <citation type="journal article" date="1998" name="Eur. J. Biochem.">
        <title>Bound water in apo and holo bovine heart fatty-acid-binding protein determined by heteronuclear NMR spectroscopy.</title>
        <authorList>
            <person name="Mesgarzadeh A."/>
            <person name="Pfeiffer S."/>
            <person name="Engelke J."/>
            <person name="Lassen D."/>
            <person name="Rueterjans H."/>
        </authorList>
    </citation>
    <scope>STRUCTURE BY NMR</scope>
</reference>
<reference key="12">
    <citation type="journal article" date="1993" name="Eur. J. Biochem.">
        <title>Isoforms of fatty-acid-binding protein in bovine heart are coded by distinct mRNA.</title>
        <authorList>
            <person name="Bartetzko N."/>
            <person name="Lezius A.G."/>
            <person name="Spener F."/>
        </authorList>
    </citation>
    <scope>VARIANT ASP-99</scope>
</reference>
<sequence>MVDAFVGTWKLVDSKNFDDYMKSLGVGFATRQVGNMTKPTTIIEVNGDTVIIKTQSTFKNTEISFKLGVEFDETTADDRKVKSIVTLDGGKLVHVQKWNGQETSLVREMVDGKLILTLTHGTAVCTRTYEKQA</sequence>
<evidence type="ECO:0000250" key="1">
    <source>
        <dbReference type="UniProtKB" id="P05413"/>
    </source>
</evidence>
<evidence type="ECO:0000250" key="2">
    <source>
        <dbReference type="UniProtKB" id="P07483"/>
    </source>
</evidence>
<evidence type="ECO:0000269" key="3">
    <source>
    </source>
</evidence>
<evidence type="ECO:0000269" key="4">
    <source>
    </source>
</evidence>
<evidence type="ECO:0000269" key="5">
    <source>
    </source>
</evidence>
<evidence type="ECO:0000305" key="6"/>
<evidence type="ECO:0007829" key="7">
    <source>
        <dbReference type="PDB" id="1BWY"/>
    </source>
</evidence>
<organism>
    <name type="scientific">Bos taurus</name>
    <name type="common">Bovine</name>
    <dbReference type="NCBI Taxonomy" id="9913"/>
    <lineage>
        <taxon>Eukaryota</taxon>
        <taxon>Metazoa</taxon>
        <taxon>Chordata</taxon>
        <taxon>Craniata</taxon>
        <taxon>Vertebrata</taxon>
        <taxon>Euteleostomi</taxon>
        <taxon>Mammalia</taxon>
        <taxon>Eutheria</taxon>
        <taxon>Laurasiatheria</taxon>
        <taxon>Artiodactyla</taxon>
        <taxon>Ruminantia</taxon>
        <taxon>Pecora</taxon>
        <taxon>Bovidae</taxon>
        <taxon>Bovinae</taxon>
        <taxon>Bos</taxon>
    </lineage>
</organism>
<protein>
    <recommendedName>
        <fullName>Fatty acid-binding protein, heart</fullName>
    </recommendedName>
    <alternativeName>
        <fullName>Fatty acid-binding protein 3</fullName>
    </alternativeName>
    <alternativeName>
        <fullName>Heart-type fatty acid-binding protein</fullName>
        <shortName>H-FABP</shortName>
    </alternativeName>
    <alternativeName>
        <fullName>Mammary-derived growth inhibitor</fullName>
        <shortName>MDGI</shortName>
    </alternativeName>
</protein>
<proteinExistence type="evidence at protein level"/>
<feature type="initiator methionine" description="Removed" evidence="3 4">
    <location>
        <position position="1"/>
    </location>
</feature>
<feature type="chain" id="PRO_0000067320" description="Fatty acid-binding protein, heart">
    <location>
        <begin position="2"/>
        <end position="133"/>
    </location>
</feature>
<feature type="binding site" evidence="1">
    <location>
        <begin position="127"/>
        <end position="129"/>
    </location>
    <ligand>
        <name>(9Z)-octadecenoate</name>
        <dbReference type="ChEBI" id="CHEBI:30823"/>
    </ligand>
</feature>
<feature type="binding site" evidence="1">
    <location>
        <begin position="127"/>
        <end position="129"/>
    </location>
    <ligand>
        <name>hexadecanoate</name>
        <dbReference type="ChEBI" id="CHEBI:7896"/>
    </ligand>
</feature>
<feature type="binding site" evidence="1">
    <location>
        <begin position="127"/>
        <end position="129"/>
    </location>
    <ligand>
        <name>octadecanoate</name>
        <dbReference type="ChEBI" id="CHEBI:25629"/>
    </ligand>
</feature>
<feature type="modified residue" description="N-acetylvaline" evidence="3">
    <location>
        <position position="2"/>
    </location>
</feature>
<feature type="modified residue" description="Phosphothreonine" evidence="2">
    <location>
        <position position="8"/>
    </location>
</feature>
<feature type="modified residue" description="Phosphotyrosine; by Tyr-kinases" evidence="2">
    <location>
        <position position="20"/>
    </location>
</feature>
<feature type="modified residue" description="Phosphoserine" evidence="2">
    <location>
        <position position="23"/>
    </location>
</feature>
<feature type="modified residue" description="Phosphothreonine" evidence="2">
    <location>
        <position position="30"/>
    </location>
</feature>
<feature type="modified residue" description="Phosphoserine" evidence="2">
    <location>
        <position position="83"/>
    </location>
</feature>
<feature type="sequence variant" evidence="5">
    <original>N</original>
    <variation>D</variation>
    <location>
        <position position="99"/>
    </location>
</feature>
<feature type="sequence conflict" description="In Ref. 6; AA sequence." evidence="6" ref="6">
    <original>DSK</original>
    <variation>SSE</variation>
    <location>
        <begin position="13"/>
        <end position="15"/>
    </location>
</feature>
<feature type="sequence conflict" description="In Ref. 6; AA sequence." evidence="6" ref="6">
    <original>T</original>
    <variation>L</variation>
    <location>
        <position position="41"/>
    </location>
</feature>
<feature type="sequence conflict" description="In Ref. 6; AA sequence." evidence="6" ref="6">
    <original>E</original>
    <variation>S</variation>
    <location>
        <position position="44"/>
    </location>
</feature>
<feature type="sequence conflict" description="In Ref. 6; AA sequence." evidence="6" ref="6">
    <original>H</original>
    <variation>Q</variation>
    <location>
        <position position="94"/>
    </location>
</feature>
<feature type="sequence conflict" description="In Ref. 6; AA sequence." evidence="6" ref="6">
    <original>T</original>
    <variation>V</variation>
    <location>
        <position position="128"/>
    </location>
</feature>
<feature type="turn" evidence="7">
    <location>
        <begin position="3"/>
        <end position="5"/>
    </location>
</feature>
<feature type="strand" evidence="7">
    <location>
        <begin position="7"/>
        <end position="14"/>
    </location>
</feature>
<feature type="helix" evidence="7">
    <location>
        <begin position="17"/>
        <end position="24"/>
    </location>
</feature>
<feature type="turn" evidence="7">
    <location>
        <begin position="28"/>
        <end position="30"/>
    </location>
</feature>
<feature type="helix" evidence="7">
    <location>
        <begin position="31"/>
        <end position="34"/>
    </location>
</feature>
<feature type="strand" evidence="7">
    <location>
        <begin position="40"/>
        <end position="46"/>
    </location>
</feature>
<feature type="strand" evidence="7">
    <location>
        <begin position="49"/>
        <end position="54"/>
    </location>
</feature>
<feature type="strand" evidence="7">
    <location>
        <begin position="61"/>
        <end position="65"/>
    </location>
</feature>
<feature type="strand" evidence="7">
    <location>
        <begin position="69"/>
        <end position="75"/>
    </location>
</feature>
<feature type="turn" evidence="7">
    <location>
        <begin position="76"/>
        <end position="78"/>
    </location>
</feature>
<feature type="strand" evidence="7">
    <location>
        <begin position="79"/>
        <end position="88"/>
    </location>
</feature>
<feature type="strand" evidence="7">
    <location>
        <begin position="91"/>
        <end position="97"/>
    </location>
</feature>
<feature type="strand" evidence="7">
    <location>
        <begin position="102"/>
        <end position="110"/>
    </location>
</feature>
<feature type="strand" evidence="7">
    <location>
        <begin position="113"/>
        <end position="122"/>
    </location>
</feature>
<feature type="strand" evidence="7">
    <location>
        <begin position="124"/>
        <end position="133"/>
    </location>
</feature>
<accession>P10790</accession>
<accession>P12103</accession>
<accession>Q3T125</accession>
<gene>
    <name type="primary">FABP3</name>
</gene>
<name>FABPH_BOVIN</name>
<dbReference type="EMBL" id="X12710">
    <property type="protein sequence ID" value="CAA31212.1"/>
    <property type="molecule type" value="mRNA"/>
</dbReference>
<dbReference type="EMBL" id="X51933">
    <property type="protein sequence ID" value="CAA36199.1"/>
    <property type="molecule type" value="mRNA"/>
</dbReference>
<dbReference type="EMBL" id="DQ174319">
    <property type="protein sequence ID" value="AAZ99892.1"/>
    <property type="molecule type" value="Genomic_DNA"/>
</dbReference>
<dbReference type="EMBL" id="BC102153">
    <property type="protein sequence ID" value="AAI02154.1"/>
    <property type="molecule type" value="mRNA"/>
</dbReference>
<dbReference type="PIR" id="A34676">
    <property type="entry name" value="A34676"/>
</dbReference>
<dbReference type="RefSeq" id="NP_776738.1">
    <property type="nucleotide sequence ID" value="NM_174313.2"/>
</dbReference>
<dbReference type="PDB" id="1BWY">
    <property type="method" value="NMR"/>
    <property type="chains" value="A=2-133"/>
</dbReference>
<dbReference type="PDBsum" id="1BWY"/>
<dbReference type="SMR" id="P10790"/>
<dbReference type="FunCoup" id="P10790">
    <property type="interactions" value="420"/>
</dbReference>
<dbReference type="STRING" id="9913.ENSBTAP00000022375"/>
<dbReference type="iPTMnet" id="P10790"/>
<dbReference type="PaxDb" id="9913-ENSBTAP00000022375"/>
<dbReference type="PeptideAtlas" id="P10790"/>
<dbReference type="Ensembl" id="ENSBTAT00000022375.6">
    <property type="protein sequence ID" value="ENSBTAP00000022375.4"/>
    <property type="gene ID" value="ENSBTAG00000016819.6"/>
</dbReference>
<dbReference type="GeneID" id="281758"/>
<dbReference type="KEGG" id="bta:281758"/>
<dbReference type="CTD" id="2170"/>
<dbReference type="VEuPathDB" id="HostDB:ENSBTAG00000016819"/>
<dbReference type="VGNC" id="VGNC:28697">
    <property type="gene designation" value="FABP3"/>
</dbReference>
<dbReference type="eggNOG" id="KOG4015">
    <property type="taxonomic scope" value="Eukaryota"/>
</dbReference>
<dbReference type="GeneTree" id="ENSGT00940000155104"/>
<dbReference type="HOGENOM" id="CLU_113772_0_0_1"/>
<dbReference type="InParanoid" id="P10790"/>
<dbReference type="OMA" id="NTEINCK"/>
<dbReference type="OrthoDB" id="354351at2759"/>
<dbReference type="TreeFam" id="TF316894"/>
<dbReference type="Reactome" id="R-BTA-163560">
    <property type="pathway name" value="Triglyceride catabolism"/>
</dbReference>
<dbReference type="EvolutionaryTrace" id="P10790"/>
<dbReference type="Proteomes" id="UP000009136">
    <property type="component" value="Chromosome 2"/>
</dbReference>
<dbReference type="Bgee" id="ENSBTAG00000016819">
    <property type="expression patterns" value="Expressed in gluteus medius and 107 other cell types or tissues"/>
</dbReference>
<dbReference type="GO" id="GO:0005829">
    <property type="term" value="C:cytosol"/>
    <property type="evidence" value="ECO:0000318"/>
    <property type="project" value="GO_Central"/>
</dbReference>
<dbReference type="GO" id="GO:0005759">
    <property type="term" value="C:mitochondrial matrix"/>
    <property type="evidence" value="ECO:0007669"/>
    <property type="project" value="UniProtKB-SubCell"/>
</dbReference>
<dbReference type="GO" id="GO:0005634">
    <property type="term" value="C:nucleus"/>
    <property type="evidence" value="ECO:0000318"/>
    <property type="project" value="GO_Central"/>
</dbReference>
<dbReference type="GO" id="GO:0036041">
    <property type="term" value="F:long-chain fatty acid binding"/>
    <property type="evidence" value="ECO:0000318"/>
    <property type="project" value="GO_Central"/>
</dbReference>
<dbReference type="GO" id="GO:0015909">
    <property type="term" value="P:long-chain fatty acid transport"/>
    <property type="evidence" value="ECO:0000318"/>
    <property type="project" value="GO_Central"/>
</dbReference>
<dbReference type="CDD" id="cd19466">
    <property type="entry name" value="FABP3"/>
    <property type="match status" value="1"/>
</dbReference>
<dbReference type="FunFam" id="2.40.128.20:FF:000001">
    <property type="entry name" value="Fatty acid-binding protein, adipocyte"/>
    <property type="match status" value="1"/>
</dbReference>
<dbReference type="Gene3D" id="2.40.128.20">
    <property type="match status" value="1"/>
</dbReference>
<dbReference type="InterPro" id="IPR012674">
    <property type="entry name" value="Calycin"/>
</dbReference>
<dbReference type="InterPro" id="IPR000463">
    <property type="entry name" value="Fatty_acid-bd"/>
</dbReference>
<dbReference type="InterPro" id="IPR031259">
    <property type="entry name" value="ILBP"/>
</dbReference>
<dbReference type="InterPro" id="IPR000566">
    <property type="entry name" value="Lipocln_cytosolic_FA-bd_dom"/>
</dbReference>
<dbReference type="PANTHER" id="PTHR11955">
    <property type="entry name" value="FATTY ACID BINDING PROTEIN"/>
    <property type="match status" value="1"/>
</dbReference>
<dbReference type="Pfam" id="PF00061">
    <property type="entry name" value="Lipocalin"/>
    <property type="match status" value="1"/>
</dbReference>
<dbReference type="PRINTS" id="PR00178">
    <property type="entry name" value="FATTYACIDBP"/>
</dbReference>
<dbReference type="SUPFAM" id="SSF50814">
    <property type="entry name" value="Lipocalins"/>
    <property type="match status" value="1"/>
</dbReference>
<dbReference type="PROSITE" id="PS00214">
    <property type="entry name" value="FABP"/>
    <property type="match status" value="1"/>
</dbReference>
<comment type="function">
    <text>FABPs are thought to play a role in the intracellular transport of long-chain fatty acids and their acyl-CoA esters.</text>
</comment>
<comment type="function">
    <text>MDGI reversibly inhibits proliferation of mammary carcinoma cells.</text>
</comment>
<comment type="subcellular location">
    <subcellularLocation>
        <location>Cytoplasm</location>
    </subcellularLocation>
    <subcellularLocation>
        <location>Mitochondrion matrix</location>
    </subcellularLocation>
</comment>
<comment type="tissue specificity">
    <text>Mammary epithelial cells of developing lobuloalveolar structures and heart.</text>
</comment>
<comment type="domain">
    <text>Forms a beta-barrel structure that accommodates the hydrophobic ligand in its interior.</text>
</comment>
<comment type="similarity">
    <text evidence="6">Belongs to the calycin superfamily. Fatty-acid binding protein (FABP) family.</text>
</comment>
<keyword id="KW-0002">3D-structure</keyword>
<keyword id="KW-0007">Acetylation</keyword>
<keyword id="KW-0963">Cytoplasm</keyword>
<keyword id="KW-0903">Direct protein sequencing</keyword>
<keyword id="KW-0446">Lipid-binding</keyword>
<keyword id="KW-0496">Mitochondrion</keyword>
<keyword id="KW-0597">Phosphoprotein</keyword>
<keyword id="KW-1185">Reference proteome</keyword>
<keyword id="KW-0813">Transport</keyword>